<name>RECX_STRPF</name>
<sequence length="258" mass="30587">MKITKIEKKKRLYLIELDNDESLYVTEDTIVRFMLSKDKVLDNDQLEDMKHFAQLSYGKNLALYFLSFQQRSNKQVADYLRKHEIEEHIIPDIITQLQEEQWIDDTKLADTYIRQNQLNGDKGPQVLKQKLLQKGIASHDIDPILSQTDFSQLAQKVSQKLFDKYQEKLPPKALKDKITQALLTKGFSYDLAKHSLNHLNFDQDNQEIENLLDKELDKQYRKLSRKYDGYTLKQKLYQALYRKGYNSDDINCKLRNYL</sequence>
<keyword id="KW-0963">Cytoplasm</keyword>
<accession>Q1J5K7</accession>
<feature type="chain" id="PRO_1000065219" description="Regulatory protein RecX">
    <location>
        <begin position="1"/>
        <end position="258"/>
    </location>
</feature>
<reference key="1">
    <citation type="journal article" date="2006" name="Proc. Natl. Acad. Sci. U.S.A.">
        <title>Molecular genetic anatomy of inter- and intraserotype variation in the human bacterial pathogen group A Streptococcus.</title>
        <authorList>
            <person name="Beres S.B."/>
            <person name="Richter E.W."/>
            <person name="Nagiec M.J."/>
            <person name="Sumby P."/>
            <person name="Porcella S.F."/>
            <person name="DeLeo F.R."/>
            <person name="Musser J.M."/>
        </authorList>
    </citation>
    <scope>NUCLEOTIDE SEQUENCE [LARGE SCALE GENOMIC DNA]</scope>
    <source>
        <strain>MGAS10750</strain>
    </source>
</reference>
<organism>
    <name type="scientific">Streptococcus pyogenes serotype M4 (strain MGAS10750)</name>
    <dbReference type="NCBI Taxonomy" id="370554"/>
    <lineage>
        <taxon>Bacteria</taxon>
        <taxon>Bacillati</taxon>
        <taxon>Bacillota</taxon>
        <taxon>Bacilli</taxon>
        <taxon>Lactobacillales</taxon>
        <taxon>Streptococcaceae</taxon>
        <taxon>Streptococcus</taxon>
    </lineage>
</organism>
<proteinExistence type="inferred from homology"/>
<evidence type="ECO:0000255" key="1">
    <source>
        <dbReference type="HAMAP-Rule" id="MF_01114"/>
    </source>
</evidence>
<comment type="function">
    <text evidence="1">Modulates RecA activity.</text>
</comment>
<comment type="subcellular location">
    <subcellularLocation>
        <location evidence="1">Cytoplasm</location>
    </subcellularLocation>
</comment>
<comment type="similarity">
    <text evidence="1">Belongs to the RecX family.</text>
</comment>
<protein>
    <recommendedName>
        <fullName evidence="1">Regulatory protein RecX</fullName>
    </recommendedName>
</protein>
<dbReference type="EMBL" id="CP000262">
    <property type="protein sequence ID" value="ABF38379.1"/>
    <property type="molecule type" value="Genomic_DNA"/>
</dbReference>
<dbReference type="SMR" id="Q1J5K7"/>
<dbReference type="KEGG" id="spi:MGAS10750_Spy1429"/>
<dbReference type="HOGENOM" id="CLU_066607_4_0_9"/>
<dbReference type="Proteomes" id="UP000002434">
    <property type="component" value="Chromosome"/>
</dbReference>
<dbReference type="GO" id="GO:0005737">
    <property type="term" value="C:cytoplasm"/>
    <property type="evidence" value="ECO:0007669"/>
    <property type="project" value="UniProtKB-SubCell"/>
</dbReference>
<dbReference type="GO" id="GO:0006282">
    <property type="term" value="P:regulation of DNA repair"/>
    <property type="evidence" value="ECO:0007669"/>
    <property type="project" value="UniProtKB-UniRule"/>
</dbReference>
<dbReference type="Gene3D" id="1.10.10.10">
    <property type="entry name" value="Winged helix-like DNA-binding domain superfamily/Winged helix DNA-binding domain"/>
    <property type="match status" value="4"/>
</dbReference>
<dbReference type="HAMAP" id="MF_01114">
    <property type="entry name" value="RecX"/>
    <property type="match status" value="1"/>
</dbReference>
<dbReference type="InterPro" id="IPR053926">
    <property type="entry name" value="RecX_HTH_1st"/>
</dbReference>
<dbReference type="InterPro" id="IPR053924">
    <property type="entry name" value="RecX_HTH_2nd"/>
</dbReference>
<dbReference type="InterPro" id="IPR053925">
    <property type="entry name" value="RecX_HTH_3rd"/>
</dbReference>
<dbReference type="InterPro" id="IPR003783">
    <property type="entry name" value="Regulatory_RecX"/>
</dbReference>
<dbReference type="InterPro" id="IPR036388">
    <property type="entry name" value="WH-like_DNA-bd_sf"/>
</dbReference>
<dbReference type="NCBIfam" id="NF010733">
    <property type="entry name" value="PRK14135.1"/>
    <property type="match status" value="1"/>
</dbReference>
<dbReference type="PANTHER" id="PTHR33602">
    <property type="entry name" value="REGULATORY PROTEIN RECX FAMILY PROTEIN"/>
    <property type="match status" value="1"/>
</dbReference>
<dbReference type="PANTHER" id="PTHR33602:SF1">
    <property type="entry name" value="REGULATORY PROTEIN RECX FAMILY PROTEIN"/>
    <property type="match status" value="1"/>
</dbReference>
<dbReference type="Pfam" id="PF21982">
    <property type="entry name" value="RecX_HTH1"/>
    <property type="match status" value="1"/>
</dbReference>
<dbReference type="Pfam" id="PF02631">
    <property type="entry name" value="RecX_HTH2"/>
    <property type="match status" value="1"/>
</dbReference>
<dbReference type="Pfam" id="PF21981">
    <property type="entry name" value="RecX_HTH3"/>
    <property type="match status" value="2"/>
</dbReference>
<gene>
    <name evidence="1" type="primary">recX</name>
    <name type="ordered locus">MGAS10750_Spy1429</name>
</gene>